<name>GLMU_TRIEI</name>
<keyword id="KW-0012">Acyltransferase</keyword>
<keyword id="KW-0133">Cell shape</keyword>
<keyword id="KW-0961">Cell wall biogenesis/degradation</keyword>
<keyword id="KW-0963">Cytoplasm</keyword>
<keyword id="KW-0460">Magnesium</keyword>
<keyword id="KW-0479">Metal-binding</keyword>
<keyword id="KW-0511">Multifunctional enzyme</keyword>
<keyword id="KW-0548">Nucleotidyltransferase</keyword>
<keyword id="KW-0573">Peptidoglycan synthesis</keyword>
<keyword id="KW-0677">Repeat</keyword>
<keyword id="KW-0808">Transferase</keyword>
<evidence type="ECO:0000255" key="1">
    <source>
        <dbReference type="HAMAP-Rule" id="MF_01631"/>
    </source>
</evidence>
<reference key="1">
    <citation type="journal article" date="2015" name="Proc. Natl. Acad. Sci. U.S.A.">
        <title>Trichodesmium genome maintains abundant, widespread noncoding DNA in situ, despite oligotrophic lifestyle.</title>
        <authorList>
            <person name="Walworth N."/>
            <person name="Pfreundt U."/>
            <person name="Nelson W.C."/>
            <person name="Mincer T."/>
            <person name="Heidelberg J.F."/>
            <person name="Fu F."/>
            <person name="Waterbury J.B."/>
            <person name="Glavina del Rio T."/>
            <person name="Goodwin L."/>
            <person name="Kyrpides N.C."/>
            <person name="Land M.L."/>
            <person name="Woyke T."/>
            <person name="Hutchins D.A."/>
            <person name="Hess W.R."/>
            <person name="Webb E.A."/>
        </authorList>
    </citation>
    <scope>NUCLEOTIDE SEQUENCE [LARGE SCALE GENOMIC DNA]</scope>
    <source>
        <strain>IMS101</strain>
    </source>
</reference>
<organism>
    <name type="scientific">Trichodesmium erythraeum (strain IMS101)</name>
    <dbReference type="NCBI Taxonomy" id="203124"/>
    <lineage>
        <taxon>Bacteria</taxon>
        <taxon>Bacillati</taxon>
        <taxon>Cyanobacteriota</taxon>
        <taxon>Cyanophyceae</taxon>
        <taxon>Oscillatoriophycideae</taxon>
        <taxon>Oscillatoriales</taxon>
        <taxon>Microcoleaceae</taxon>
        <taxon>Trichodesmium</taxon>
    </lineage>
</organism>
<proteinExistence type="inferred from homology"/>
<sequence>MVAVAILAAGRGTRMKSDLPKVLHQLGSCTLVKRVIKSCVSIQPSKIMVIVGYRGGLVQKSLLDNNNNIDNDNTPTLEFVEQTEQLGTGHAIQQLLPYLKDFSEELLVLNGDVPLLRPETIKQLIDTHQQNKNSATILTANLPNPKGYGRIFCNTNNFVTQIVEERDCTAAQTKNHRVNAGVYCFNWPALANILPKLKADNDQQEYYLTDVVPLLDPVMAVDVNDYQEIFGINNRKHLAKAHEILQVRVKDDWMEAGVTLIDPDSITIDDTVLLQQDVIVEPQTHIRGSSIIGSGSRIGPGSLIENSHIGKNTSVLYSVISDSMVADNTRIGPYAHLRGDSQVGSHCRIGNFVELKKATVGDRSNAAHLSYLGDATLGEKVNIGAGTITANYDGVKKHKTKIGDRSKTGSNSVLVAPVTLGEDVTVAAGSVVTKNVEDDSLVIGRARQAVKKGWRLKQSDESKKEENKSSP</sequence>
<protein>
    <recommendedName>
        <fullName evidence="1">Bifunctional protein GlmU</fullName>
    </recommendedName>
    <domain>
        <recommendedName>
            <fullName evidence="1">UDP-N-acetylglucosamine pyrophosphorylase</fullName>
            <ecNumber evidence="1">2.7.7.23</ecNumber>
        </recommendedName>
        <alternativeName>
            <fullName evidence="1">N-acetylglucosamine-1-phosphate uridyltransferase</fullName>
        </alternativeName>
    </domain>
    <domain>
        <recommendedName>
            <fullName evidence="1">Glucosamine-1-phosphate N-acetyltransferase</fullName>
            <ecNumber evidence="1">2.3.1.157</ecNumber>
        </recommendedName>
    </domain>
</protein>
<comment type="function">
    <text evidence="1">Catalyzes the last two sequential reactions in the de novo biosynthetic pathway for UDP-N-acetylglucosamine (UDP-GlcNAc). The C-terminal domain catalyzes the transfer of acetyl group from acetyl coenzyme A to glucosamine-1-phosphate (GlcN-1-P) to produce N-acetylglucosamine-1-phosphate (GlcNAc-1-P), which is converted into UDP-GlcNAc by the transfer of uridine 5-monophosphate (from uridine 5-triphosphate), a reaction catalyzed by the N-terminal domain.</text>
</comment>
<comment type="catalytic activity">
    <reaction evidence="1">
        <text>alpha-D-glucosamine 1-phosphate + acetyl-CoA = N-acetyl-alpha-D-glucosamine 1-phosphate + CoA + H(+)</text>
        <dbReference type="Rhea" id="RHEA:13725"/>
        <dbReference type="ChEBI" id="CHEBI:15378"/>
        <dbReference type="ChEBI" id="CHEBI:57287"/>
        <dbReference type="ChEBI" id="CHEBI:57288"/>
        <dbReference type="ChEBI" id="CHEBI:57776"/>
        <dbReference type="ChEBI" id="CHEBI:58516"/>
        <dbReference type="EC" id="2.3.1.157"/>
    </reaction>
</comment>
<comment type="catalytic activity">
    <reaction evidence="1">
        <text>N-acetyl-alpha-D-glucosamine 1-phosphate + UTP + H(+) = UDP-N-acetyl-alpha-D-glucosamine + diphosphate</text>
        <dbReference type="Rhea" id="RHEA:13509"/>
        <dbReference type="ChEBI" id="CHEBI:15378"/>
        <dbReference type="ChEBI" id="CHEBI:33019"/>
        <dbReference type="ChEBI" id="CHEBI:46398"/>
        <dbReference type="ChEBI" id="CHEBI:57705"/>
        <dbReference type="ChEBI" id="CHEBI:57776"/>
        <dbReference type="EC" id="2.7.7.23"/>
    </reaction>
</comment>
<comment type="cofactor">
    <cofactor evidence="1">
        <name>Mg(2+)</name>
        <dbReference type="ChEBI" id="CHEBI:18420"/>
    </cofactor>
    <text evidence="1">Binds 1 Mg(2+) ion per subunit.</text>
</comment>
<comment type="pathway">
    <text evidence="1">Nucleotide-sugar biosynthesis; UDP-N-acetyl-alpha-D-glucosamine biosynthesis; N-acetyl-alpha-D-glucosamine 1-phosphate from alpha-D-glucosamine 6-phosphate (route II): step 2/2.</text>
</comment>
<comment type="pathway">
    <text evidence="1">Nucleotide-sugar biosynthesis; UDP-N-acetyl-alpha-D-glucosamine biosynthesis; UDP-N-acetyl-alpha-D-glucosamine from N-acetyl-alpha-D-glucosamine 1-phosphate: step 1/1.</text>
</comment>
<comment type="pathway">
    <text evidence="1">Bacterial outer membrane biogenesis; LPS lipid A biosynthesis.</text>
</comment>
<comment type="subunit">
    <text evidence="1">Homotrimer.</text>
</comment>
<comment type="subcellular location">
    <subcellularLocation>
        <location evidence="1">Cytoplasm</location>
    </subcellularLocation>
</comment>
<comment type="similarity">
    <text evidence="1">In the N-terminal section; belongs to the N-acetylglucosamine-1-phosphate uridyltransferase family.</text>
</comment>
<comment type="similarity">
    <text evidence="1">In the C-terminal section; belongs to the transferase hexapeptide repeat family.</text>
</comment>
<dbReference type="EC" id="2.7.7.23" evidence="1"/>
<dbReference type="EC" id="2.3.1.157" evidence="1"/>
<dbReference type="EMBL" id="CP000393">
    <property type="protein sequence ID" value="ABG50008.1"/>
    <property type="molecule type" value="Genomic_DNA"/>
</dbReference>
<dbReference type="RefSeq" id="WP_011610402.1">
    <property type="nucleotide sequence ID" value="NC_008312.1"/>
</dbReference>
<dbReference type="SMR" id="Q118R6"/>
<dbReference type="STRING" id="203124.Tery_0560"/>
<dbReference type="KEGG" id="ter:Tery_0560"/>
<dbReference type="eggNOG" id="COG1207">
    <property type="taxonomic scope" value="Bacteria"/>
</dbReference>
<dbReference type="HOGENOM" id="CLU_029499_15_2_3"/>
<dbReference type="OrthoDB" id="9775031at2"/>
<dbReference type="UniPathway" id="UPA00113">
    <property type="reaction ID" value="UER00532"/>
</dbReference>
<dbReference type="UniPathway" id="UPA00113">
    <property type="reaction ID" value="UER00533"/>
</dbReference>
<dbReference type="UniPathway" id="UPA00973"/>
<dbReference type="GO" id="GO:0031470">
    <property type="term" value="C:carboxysome"/>
    <property type="evidence" value="ECO:0007669"/>
    <property type="project" value="UniProtKB-ARBA"/>
</dbReference>
<dbReference type="GO" id="GO:0005737">
    <property type="term" value="C:cytoplasm"/>
    <property type="evidence" value="ECO:0007669"/>
    <property type="project" value="UniProtKB-SubCell"/>
</dbReference>
<dbReference type="GO" id="GO:0016020">
    <property type="term" value="C:membrane"/>
    <property type="evidence" value="ECO:0007669"/>
    <property type="project" value="GOC"/>
</dbReference>
<dbReference type="GO" id="GO:0019134">
    <property type="term" value="F:glucosamine-1-phosphate N-acetyltransferase activity"/>
    <property type="evidence" value="ECO:0007669"/>
    <property type="project" value="UniProtKB-UniRule"/>
</dbReference>
<dbReference type="GO" id="GO:0000287">
    <property type="term" value="F:magnesium ion binding"/>
    <property type="evidence" value="ECO:0007669"/>
    <property type="project" value="UniProtKB-UniRule"/>
</dbReference>
<dbReference type="GO" id="GO:0043886">
    <property type="term" value="F:structural constituent of carboxysome shell"/>
    <property type="evidence" value="ECO:0007669"/>
    <property type="project" value="UniProtKB-ARBA"/>
</dbReference>
<dbReference type="GO" id="GO:0003977">
    <property type="term" value="F:UDP-N-acetylglucosamine diphosphorylase activity"/>
    <property type="evidence" value="ECO:0007669"/>
    <property type="project" value="UniProtKB-UniRule"/>
</dbReference>
<dbReference type="GO" id="GO:0000902">
    <property type="term" value="P:cell morphogenesis"/>
    <property type="evidence" value="ECO:0007669"/>
    <property type="project" value="UniProtKB-UniRule"/>
</dbReference>
<dbReference type="GO" id="GO:0071555">
    <property type="term" value="P:cell wall organization"/>
    <property type="evidence" value="ECO:0007669"/>
    <property type="project" value="UniProtKB-KW"/>
</dbReference>
<dbReference type="GO" id="GO:0009245">
    <property type="term" value="P:lipid A biosynthetic process"/>
    <property type="evidence" value="ECO:0007669"/>
    <property type="project" value="UniProtKB-UniRule"/>
</dbReference>
<dbReference type="GO" id="GO:0009252">
    <property type="term" value="P:peptidoglycan biosynthetic process"/>
    <property type="evidence" value="ECO:0007669"/>
    <property type="project" value="UniProtKB-UniRule"/>
</dbReference>
<dbReference type="GO" id="GO:0008360">
    <property type="term" value="P:regulation of cell shape"/>
    <property type="evidence" value="ECO:0007669"/>
    <property type="project" value="UniProtKB-KW"/>
</dbReference>
<dbReference type="GO" id="GO:0006048">
    <property type="term" value="P:UDP-N-acetylglucosamine biosynthetic process"/>
    <property type="evidence" value="ECO:0007669"/>
    <property type="project" value="UniProtKB-UniPathway"/>
</dbReference>
<dbReference type="CDD" id="cd02540">
    <property type="entry name" value="GT2_GlmU_N_bac"/>
    <property type="match status" value="1"/>
</dbReference>
<dbReference type="CDD" id="cd03353">
    <property type="entry name" value="LbH_GlmU_C"/>
    <property type="match status" value="1"/>
</dbReference>
<dbReference type="Gene3D" id="2.160.10.10">
    <property type="entry name" value="Hexapeptide repeat proteins"/>
    <property type="match status" value="1"/>
</dbReference>
<dbReference type="Gene3D" id="3.90.550.10">
    <property type="entry name" value="Spore Coat Polysaccharide Biosynthesis Protein SpsA, Chain A"/>
    <property type="match status" value="1"/>
</dbReference>
<dbReference type="HAMAP" id="MF_01631">
    <property type="entry name" value="GlmU"/>
    <property type="match status" value="1"/>
</dbReference>
<dbReference type="InterPro" id="IPR005882">
    <property type="entry name" value="Bifunctional_GlmU"/>
</dbReference>
<dbReference type="InterPro" id="IPR050065">
    <property type="entry name" value="GlmU-like"/>
</dbReference>
<dbReference type="InterPro" id="IPR038009">
    <property type="entry name" value="GlmU_C_LbH"/>
</dbReference>
<dbReference type="InterPro" id="IPR001451">
    <property type="entry name" value="Hexapep"/>
</dbReference>
<dbReference type="InterPro" id="IPR005835">
    <property type="entry name" value="NTP_transferase_dom"/>
</dbReference>
<dbReference type="InterPro" id="IPR029044">
    <property type="entry name" value="Nucleotide-diphossugar_trans"/>
</dbReference>
<dbReference type="InterPro" id="IPR011004">
    <property type="entry name" value="Trimer_LpxA-like_sf"/>
</dbReference>
<dbReference type="NCBIfam" id="TIGR01173">
    <property type="entry name" value="glmU"/>
    <property type="match status" value="1"/>
</dbReference>
<dbReference type="NCBIfam" id="NF010940">
    <property type="entry name" value="PRK14360.1"/>
    <property type="match status" value="1"/>
</dbReference>
<dbReference type="PANTHER" id="PTHR43584:SF3">
    <property type="entry name" value="BIFUNCTIONAL PROTEIN GLMU"/>
    <property type="match status" value="1"/>
</dbReference>
<dbReference type="PANTHER" id="PTHR43584">
    <property type="entry name" value="NUCLEOTIDYL TRANSFERASE"/>
    <property type="match status" value="1"/>
</dbReference>
<dbReference type="Pfam" id="PF00132">
    <property type="entry name" value="Hexapep"/>
    <property type="match status" value="2"/>
</dbReference>
<dbReference type="Pfam" id="PF00483">
    <property type="entry name" value="NTP_transferase"/>
    <property type="match status" value="1"/>
</dbReference>
<dbReference type="SUPFAM" id="SSF53448">
    <property type="entry name" value="Nucleotide-diphospho-sugar transferases"/>
    <property type="match status" value="1"/>
</dbReference>
<dbReference type="SUPFAM" id="SSF51161">
    <property type="entry name" value="Trimeric LpxA-like enzymes"/>
    <property type="match status" value="1"/>
</dbReference>
<feature type="chain" id="PRO_0000263165" description="Bifunctional protein GlmU">
    <location>
        <begin position="1"/>
        <end position="471"/>
    </location>
</feature>
<feature type="region of interest" description="Pyrophosphorylase" evidence="1">
    <location>
        <begin position="1"/>
        <end position="235"/>
    </location>
</feature>
<feature type="region of interest" description="Linker" evidence="1">
    <location>
        <begin position="236"/>
        <end position="256"/>
    </location>
</feature>
<feature type="region of interest" description="N-acetyltransferase" evidence="1">
    <location>
        <begin position="257"/>
        <end position="471"/>
    </location>
</feature>
<feature type="active site" description="Proton acceptor" evidence="1">
    <location>
        <position position="368"/>
    </location>
</feature>
<feature type="binding site" evidence="1">
    <location>
        <begin position="7"/>
        <end position="10"/>
    </location>
    <ligand>
        <name>UDP-N-acetyl-alpha-D-glucosamine</name>
        <dbReference type="ChEBI" id="CHEBI:57705"/>
    </ligand>
</feature>
<feature type="binding site" evidence="1">
    <location>
        <position position="21"/>
    </location>
    <ligand>
        <name>UDP-N-acetyl-alpha-D-glucosamine</name>
        <dbReference type="ChEBI" id="CHEBI:57705"/>
    </ligand>
</feature>
<feature type="binding site" evidence="1">
    <location>
        <position position="82"/>
    </location>
    <ligand>
        <name>UDP-N-acetyl-alpha-D-glucosamine</name>
        <dbReference type="ChEBI" id="CHEBI:57705"/>
    </ligand>
</feature>
<feature type="binding site" evidence="1">
    <location>
        <begin position="87"/>
        <end position="88"/>
    </location>
    <ligand>
        <name>UDP-N-acetyl-alpha-D-glucosamine</name>
        <dbReference type="ChEBI" id="CHEBI:57705"/>
    </ligand>
</feature>
<feature type="binding site" evidence="1">
    <location>
        <position position="112"/>
    </location>
    <ligand>
        <name>Mg(2+)</name>
        <dbReference type="ChEBI" id="CHEBI:18420"/>
    </ligand>
</feature>
<feature type="binding site" evidence="1">
    <location>
        <position position="149"/>
    </location>
    <ligand>
        <name>UDP-N-acetyl-alpha-D-glucosamine</name>
        <dbReference type="ChEBI" id="CHEBI:57705"/>
    </ligand>
</feature>
<feature type="binding site" evidence="1">
    <location>
        <position position="164"/>
    </location>
    <ligand>
        <name>UDP-N-acetyl-alpha-D-glucosamine</name>
        <dbReference type="ChEBI" id="CHEBI:57705"/>
    </ligand>
</feature>
<feature type="binding site" evidence="1">
    <location>
        <position position="179"/>
    </location>
    <ligand>
        <name>UDP-N-acetyl-alpha-D-glucosamine</name>
        <dbReference type="ChEBI" id="CHEBI:57705"/>
    </ligand>
</feature>
<feature type="binding site" evidence="1">
    <location>
        <position position="233"/>
    </location>
    <ligand>
        <name>Mg(2+)</name>
        <dbReference type="ChEBI" id="CHEBI:18420"/>
    </ligand>
</feature>
<feature type="binding site" evidence="1">
    <location>
        <position position="233"/>
    </location>
    <ligand>
        <name>UDP-N-acetyl-alpha-D-glucosamine</name>
        <dbReference type="ChEBI" id="CHEBI:57705"/>
    </ligand>
</feature>
<feature type="binding site" evidence="1">
    <location>
        <position position="338"/>
    </location>
    <ligand>
        <name>UDP-N-acetyl-alpha-D-glucosamine</name>
        <dbReference type="ChEBI" id="CHEBI:57705"/>
    </ligand>
</feature>
<feature type="binding site" evidence="1">
    <location>
        <position position="356"/>
    </location>
    <ligand>
        <name>UDP-N-acetyl-alpha-D-glucosamine</name>
        <dbReference type="ChEBI" id="CHEBI:57705"/>
    </ligand>
</feature>
<feature type="binding site" evidence="1">
    <location>
        <position position="371"/>
    </location>
    <ligand>
        <name>UDP-N-acetyl-alpha-D-glucosamine</name>
        <dbReference type="ChEBI" id="CHEBI:57705"/>
    </ligand>
</feature>
<feature type="binding site" evidence="1">
    <location>
        <position position="382"/>
    </location>
    <ligand>
        <name>UDP-N-acetyl-alpha-D-glucosamine</name>
        <dbReference type="ChEBI" id="CHEBI:57705"/>
    </ligand>
</feature>
<feature type="binding site" evidence="1">
    <location>
        <position position="385"/>
    </location>
    <ligand>
        <name>acetyl-CoA</name>
        <dbReference type="ChEBI" id="CHEBI:57288"/>
    </ligand>
</feature>
<feature type="binding site" evidence="1">
    <location>
        <begin position="391"/>
        <end position="392"/>
    </location>
    <ligand>
        <name>acetyl-CoA</name>
        <dbReference type="ChEBI" id="CHEBI:57288"/>
    </ligand>
</feature>
<feature type="binding site" evidence="1">
    <location>
        <position position="410"/>
    </location>
    <ligand>
        <name>acetyl-CoA</name>
        <dbReference type="ChEBI" id="CHEBI:57288"/>
    </ligand>
</feature>
<feature type="binding site" evidence="1">
    <location>
        <position position="428"/>
    </location>
    <ligand>
        <name>acetyl-CoA</name>
        <dbReference type="ChEBI" id="CHEBI:57288"/>
    </ligand>
</feature>
<feature type="binding site" evidence="1">
    <location>
        <position position="445"/>
    </location>
    <ligand>
        <name>acetyl-CoA</name>
        <dbReference type="ChEBI" id="CHEBI:57288"/>
    </ligand>
</feature>
<gene>
    <name evidence="1" type="primary">glmU</name>
    <name type="ordered locus">Tery_0560</name>
</gene>
<accession>Q118R6</accession>